<evidence type="ECO:0000255" key="1">
    <source>
        <dbReference type="HAMAP-Rule" id="MF_01456"/>
    </source>
</evidence>
<name>NUOK_PARUW</name>
<reference key="1">
    <citation type="journal article" date="2004" name="Science">
        <title>Illuminating the evolutionary history of chlamydiae.</title>
        <authorList>
            <person name="Horn M."/>
            <person name="Collingro A."/>
            <person name="Schmitz-Esser S."/>
            <person name="Beier C.L."/>
            <person name="Purkhold U."/>
            <person name="Fartmann B."/>
            <person name="Brandt P."/>
            <person name="Nyakatura G.J."/>
            <person name="Droege M."/>
            <person name="Frishman D."/>
            <person name="Rattei T."/>
            <person name="Mewes H.-W."/>
            <person name="Wagner M."/>
        </authorList>
    </citation>
    <scope>NUCLEOTIDE SEQUENCE [LARGE SCALE GENOMIC DNA]</scope>
    <source>
        <strain>UWE25</strain>
    </source>
</reference>
<organism>
    <name type="scientific">Protochlamydia amoebophila (strain UWE25)</name>
    <dbReference type="NCBI Taxonomy" id="264201"/>
    <lineage>
        <taxon>Bacteria</taxon>
        <taxon>Pseudomonadati</taxon>
        <taxon>Chlamydiota</taxon>
        <taxon>Chlamydiia</taxon>
        <taxon>Parachlamydiales</taxon>
        <taxon>Parachlamydiaceae</taxon>
        <taxon>Candidatus Protochlamydia</taxon>
    </lineage>
</organism>
<gene>
    <name evidence="1" type="primary">nuoK</name>
    <name type="ordered locus">pc0569</name>
</gene>
<dbReference type="EC" id="7.1.1.-" evidence="1"/>
<dbReference type="EMBL" id="BX908798">
    <property type="protein sequence ID" value="CAF23293.1"/>
    <property type="molecule type" value="Genomic_DNA"/>
</dbReference>
<dbReference type="RefSeq" id="WP_011175119.1">
    <property type="nucleotide sequence ID" value="NC_005861.2"/>
</dbReference>
<dbReference type="SMR" id="Q6MDQ6"/>
<dbReference type="STRING" id="264201.pc0569"/>
<dbReference type="KEGG" id="pcu:PC_RS02720"/>
<dbReference type="eggNOG" id="COG0713">
    <property type="taxonomic scope" value="Bacteria"/>
</dbReference>
<dbReference type="HOGENOM" id="CLU_144724_0_0_0"/>
<dbReference type="OrthoDB" id="9810120at2"/>
<dbReference type="Proteomes" id="UP000000529">
    <property type="component" value="Chromosome"/>
</dbReference>
<dbReference type="GO" id="GO:0030964">
    <property type="term" value="C:NADH dehydrogenase complex"/>
    <property type="evidence" value="ECO:0007669"/>
    <property type="project" value="TreeGrafter"/>
</dbReference>
<dbReference type="GO" id="GO:0005886">
    <property type="term" value="C:plasma membrane"/>
    <property type="evidence" value="ECO:0007669"/>
    <property type="project" value="UniProtKB-SubCell"/>
</dbReference>
<dbReference type="GO" id="GO:0050136">
    <property type="term" value="F:NADH:ubiquinone reductase (non-electrogenic) activity"/>
    <property type="evidence" value="ECO:0007669"/>
    <property type="project" value="UniProtKB-UniRule"/>
</dbReference>
<dbReference type="GO" id="GO:0048038">
    <property type="term" value="F:quinone binding"/>
    <property type="evidence" value="ECO:0007669"/>
    <property type="project" value="UniProtKB-KW"/>
</dbReference>
<dbReference type="GO" id="GO:0042773">
    <property type="term" value="P:ATP synthesis coupled electron transport"/>
    <property type="evidence" value="ECO:0007669"/>
    <property type="project" value="InterPro"/>
</dbReference>
<dbReference type="FunFam" id="1.10.287.3510:FF:000001">
    <property type="entry name" value="NADH-quinone oxidoreductase subunit K"/>
    <property type="match status" value="1"/>
</dbReference>
<dbReference type="Gene3D" id="1.10.287.3510">
    <property type="match status" value="1"/>
</dbReference>
<dbReference type="HAMAP" id="MF_01456">
    <property type="entry name" value="NDH1_NuoK"/>
    <property type="match status" value="1"/>
</dbReference>
<dbReference type="InterPro" id="IPR001133">
    <property type="entry name" value="NADH_UbQ_OxRdtase_chain4L/K"/>
</dbReference>
<dbReference type="InterPro" id="IPR039428">
    <property type="entry name" value="NUOK/Mnh_C1-like"/>
</dbReference>
<dbReference type="NCBIfam" id="NF004320">
    <property type="entry name" value="PRK05715.1-2"/>
    <property type="match status" value="1"/>
</dbReference>
<dbReference type="PANTHER" id="PTHR11434:SF21">
    <property type="entry name" value="NADH DEHYDROGENASE SUBUNIT 4L-RELATED"/>
    <property type="match status" value="1"/>
</dbReference>
<dbReference type="PANTHER" id="PTHR11434">
    <property type="entry name" value="NADH-UBIQUINONE OXIDOREDUCTASE SUBUNIT ND4L"/>
    <property type="match status" value="1"/>
</dbReference>
<dbReference type="Pfam" id="PF00420">
    <property type="entry name" value="Oxidored_q2"/>
    <property type="match status" value="1"/>
</dbReference>
<feature type="chain" id="PRO_0000390162" description="NADH-quinone oxidoreductase subunit K">
    <location>
        <begin position="1"/>
        <end position="99"/>
    </location>
</feature>
<feature type="transmembrane region" description="Helical" evidence="1">
    <location>
        <begin position="3"/>
        <end position="23"/>
    </location>
</feature>
<feature type="transmembrane region" description="Helical" evidence="1">
    <location>
        <begin position="28"/>
        <end position="48"/>
    </location>
</feature>
<feature type="transmembrane region" description="Helical" evidence="1">
    <location>
        <begin position="59"/>
        <end position="79"/>
    </location>
</feature>
<protein>
    <recommendedName>
        <fullName evidence="1">NADH-quinone oxidoreductase subunit K</fullName>
        <ecNumber evidence="1">7.1.1.-</ecNumber>
    </recommendedName>
    <alternativeName>
        <fullName evidence="1">NADH dehydrogenase I subunit K</fullName>
    </alternativeName>
    <alternativeName>
        <fullName evidence="1">NDH-1 subunit K</fullName>
    </alternativeName>
</protein>
<comment type="function">
    <text evidence="1">NDH-1 shuttles electrons from NADH, via FMN and iron-sulfur (Fe-S) centers, to quinones in the respiratory chain. The immediate electron acceptor for the enzyme in this species is believed to be ubiquinone. Couples the redox reaction to proton translocation (for every two electrons transferred, four hydrogen ions are translocated across the cytoplasmic membrane), and thus conserves the redox energy in a proton gradient.</text>
</comment>
<comment type="catalytic activity">
    <reaction evidence="1">
        <text>a quinone + NADH + 5 H(+)(in) = a quinol + NAD(+) + 4 H(+)(out)</text>
        <dbReference type="Rhea" id="RHEA:57888"/>
        <dbReference type="ChEBI" id="CHEBI:15378"/>
        <dbReference type="ChEBI" id="CHEBI:24646"/>
        <dbReference type="ChEBI" id="CHEBI:57540"/>
        <dbReference type="ChEBI" id="CHEBI:57945"/>
        <dbReference type="ChEBI" id="CHEBI:132124"/>
    </reaction>
</comment>
<comment type="subunit">
    <text evidence="1">NDH-1 is composed of 14 different subunits. Subunits NuoA, H, J, K, L, M, N constitute the membrane sector of the complex.</text>
</comment>
<comment type="subcellular location">
    <subcellularLocation>
        <location evidence="1">Cell inner membrane</location>
        <topology evidence="1">Multi-pass membrane protein</topology>
    </subcellularLocation>
</comment>
<comment type="similarity">
    <text evidence="1">Belongs to the complex I subunit 4L family.</text>
</comment>
<accession>Q6MDQ6</accession>
<proteinExistence type="inferred from homology"/>
<keyword id="KW-0997">Cell inner membrane</keyword>
<keyword id="KW-1003">Cell membrane</keyword>
<keyword id="KW-0472">Membrane</keyword>
<keyword id="KW-0520">NAD</keyword>
<keyword id="KW-0874">Quinone</keyword>
<keyword id="KW-1185">Reference proteome</keyword>
<keyword id="KW-1278">Translocase</keyword>
<keyword id="KW-0812">Transmembrane</keyword>
<keyword id="KW-1133">Transmembrane helix</keyword>
<keyword id="KW-0813">Transport</keyword>
<keyword id="KW-0830">Ubiquinone</keyword>
<sequence>MDILFSLFISMAMFTFGIIGILIKRNALIVFMCVELMLNAANLLFVAFAAHWGNETGLIWVFFVLVVAAAEAAVGLAIIINMFRSKQVVDVDQYNLLRG</sequence>